<reference key="1">
    <citation type="journal article" date="2006" name="FEBS J.">
        <title>Patatins, Kunitz protease inhibitors and other major proteins in tuber of potato cv. Kuras.</title>
        <authorList>
            <person name="Bauw G."/>
            <person name="Nielsen H.V."/>
            <person name="Emmersen J."/>
            <person name="Nielsen K.L."/>
            <person name="Joergensen M."/>
            <person name="Welinder K.G."/>
        </authorList>
    </citation>
    <scope>NUCLEOTIDE SEQUENCE [MRNA]</scope>
    <source>
        <strain>cv. Kuras</strain>
        <tissue>Tuber</tissue>
    </source>
</reference>
<comment type="function">
    <text evidence="1">Probable lipolytic acyl hydrolase (LAH), an activity which is thought to be involved in the response of tubers to pathogens.</text>
</comment>
<comment type="subcellular location">
    <subcellularLocation>
        <location evidence="1">Vacuole</location>
    </subcellularLocation>
</comment>
<comment type="domain">
    <text>The nitrogen atoms of the two glycine residues in the GGXR motif define the oxyanion hole, and stabilize the oxyanion that forms during the nucleophilic attack by the catalytic serine during substrate cleavage.</text>
</comment>
<comment type="miscellaneous">
    <text>Patatin have a dual role as a somatic storage protein and as an enzyme involved in host resistance.</text>
</comment>
<comment type="similarity">
    <text evidence="4">Belongs to the patatin family.</text>
</comment>
<keyword id="KW-0175">Coiled coil</keyword>
<keyword id="KW-0325">Glycoprotein</keyword>
<keyword id="KW-0378">Hydrolase</keyword>
<keyword id="KW-0442">Lipid degradation</keyword>
<keyword id="KW-0443">Lipid metabolism</keyword>
<keyword id="KW-0611">Plant defense</keyword>
<keyword id="KW-1185">Reference proteome</keyword>
<keyword id="KW-0732">Signal</keyword>
<keyword id="KW-0758">Storage protein</keyword>
<keyword id="KW-0926">Vacuole</keyword>
<evidence type="ECO:0000250" key="1"/>
<evidence type="ECO:0000255" key="2"/>
<evidence type="ECO:0000255" key="3">
    <source>
        <dbReference type="PROSITE-ProRule" id="PRU01161"/>
    </source>
</evidence>
<evidence type="ECO:0000305" key="4"/>
<name>PT2K2_SOLTU</name>
<dbReference type="EC" id="3.1.1.-"/>
<dbReference type="EMBL" id="DQ114418">
    <property type="protein sequence ID" value="AAZ75959.1"/>
    <property type="molecule type" value="mRNA"/>
</dbReference>
<dbReference type="SMR" id="Q3YJT2"/>
<dbReference type="GlyCosmos" id="Q3YJT2">
    <property type="glycosylation" value="1 site, No reported glycans"/>
</dbReference>
<dbReference type="InParanoid" id="Q3YJT2"/>
<dbReference type="Proteomes" id="UP000011115">
    <property type="component" value="Unassembled WGS sequence"/>
</dbReference>
<dbReference type="ExpressionAtlas" id="Q3YJT2">
    <property type="expression patterns" value="baseline"/>
</dbReference>
<dbReference type="GO" id="GO:0005773">
    <property type="term" value="C:vacuole"/>
    <property type="evidence" value="ECO:0007669"/>
    <property type="project" value="UniProtKB-SubCell"/>
</dbReference>
<dbReference type="GO" id="GO:0047372">
    <property type="term" value="F:monoacylglycerol lipase activity"/>
    <property type="evidence" value="ECO:0000318"/>
    <property type="project" value="GO_Central"/>
</dbReference>
<dbReference type="GO" id="GO:0045735">
    <property type="term" value="F:nutrient reservoir activity"/>
    <property type="evidence" value="ECO:0007669"/>
    <property type="project" value="UniProtKB-KW"/>
</dbReference>
<dbReference type="GO" id="GO:0004620">
    <property type="term" value="F:phospholipase activity"/>
    <property type="evidence" value="ECO:0000318"/>
    <property type="project" value="GO_Central"/>
</dbReference>
<dbReference type="GO" id="GO:0006952">
    <property type="term" value="P:defense response"/>
    <property type="evidence" value="ECO:0007669"/>
    <property type="project" value="UniProtKB-KW"/>
</dbReference>
<dbReference type="GO" id="GO:0016042">
    <property type="term" value="P:lipid catabolic process"/>
    <property type="evidence" value="ECO:0007669"/>
    <property type="project" value="UniProtKB-KW"/>
</dbReference>
<dbReference type="Gene3D" id="3.40.1090.10">
    <property type="entry name" value="Cytosolic phospholipase A2 catalytic domain"/>
    <property type="match status" value="1"/>
</dbReference>
<dbReference type="InterPro" id="IPR016035">
    <property type="entry name" value="Acyl_Trfase/lysoPLipase"/>
</dbReference>
<dbReference type="InterPro" id="IPR002641">
    <property type="entry name" value="PNPLA_dom"/>
</dbReference>
<dbReference type="PANTHER" id="PTHR32176:SF85">
    <property type="entry name" value="PATATIN GROUP D-2"/>
    <property type="match status" value="1"/>
</dbReference>
<dbReference type="PANTHER" id="PTHR32176">
    <property type="entry name" value="XYLOSE ISOMERASE"/>
    <property type="match status" value="1"/>
</dbReference>
<dbReference type="Pfam" id="PF01734">
    <property type="entry name" value="Patatin"/>
    <property type="match status" value="1"/>
</dbReference>
<dbReference type="SUPFAM" id="SSF52151">
    <property type="entry name" value="FabD/lysophospholipase-like"/>
    <property type="match status" value="1"/>
</dbReference>
<dbReference type="PROSITE" id="PS51635">
    <property type="entry name" value="PNPLA"/>
    <property type="match status" value="1"/>
</dbReference>
<sequence length="386" mass="42583">MATTKSFLILFFMILATTSSTCATLGEMVTVLSIDGGGIKGIIPAVILEFLEGQLQEVDNNKDARLADYFDVIGGTSTGGLLTAMITTPNENNRPFAAAKDIIPFYFEHGPHIFNYSGSIFGPMYDGKYLLQVLQEKLGETRVHQALTEVAISSFDIKTNKPVIFTKSNLAKSPELDAKMYDICYSTAAAPMYFPPHYFITHTSDGDIYEFNLVDGAVATVGDPALLSLSVATRLAQEDPAFSSIKSLDYKQMLLLSLGTGTNSEFDKTYTAEEAAKWGPLRWLLAIQQMTNAASSYMTDYYISTVFQAHHSQNNYLRVQENALTGTTTEMDDASEANMELLVQVGETLLKKPVSKDSPETYEEALKRFAKLLSDRKKLRANKASY</sequence>
<organism>
    <name type="scientific">Solanum tuberosum</name>
    <name type="common">Potato</name>
    <dbReference type="NCBI Taxonomy" id="4113"/>
    <lineage>
        <taxon>Eukaryota</taxon>
        <taxon>Viridiplantae</taxon>
        <taxon>Streptophyta</taxon>
        <taxon>Embryophyta</taxon>
        <taxon>Tracheophyta</taxon>
        <taxon>Spermatophyta</taxon>
        <taxon>Magnoliopsida</taxon>
        <taxon>eudicotyledons</taxon>
        <taxon>Gunneridae</taxon>
        <taxon>Pentapetalae</taxon>
        <taxon>asterids</taxon>
        <taxon>lamiids</taxon>
        <taxon>Solanales</taxon>
        <taxon>Solanaceae</taxon>
        <taxon>Solanoideae</taxon>
        <taxon>Solaneae</taxon>
        <taxon>Solanum</taxon>
    </lineage>
</organism>
<proteinExistence type="evidence at transcript level"/>
<accession>Q3YJT2</accession>
<gene>
    <name type="primary">pat2-k2</name>
</gene>
<feature type="signal peptide" evidence="2">
    <location>
        <begin position="1"/>
        <end position="23"/>
    </location>
</feature>
<feature type="chain" id="PRO_0000296711" description="Patatin-2-Kuras 2">
    <location>
        <begin position="24"/>
        <end position="386"/>
    </location>
</feature>
<feature type="domain" description="PNPLA" evidence="3">
    <location>
        <begin position="32"/>
        <end position="229"/>
    </location>
</feature>
<feature type="coiled-coil region" evidence="2">
    <location>
        <begin position="321"/>
        <end position="384"/>
    </location>
</feature>
<feature type="short sequence motif" description="GXGXXG" evidence="3">
    <location>
        <begin position="36"/>
        <end position="41"/>
    </location>
</feature>
<feature type="short sequence motif" description="GXSXG" evidence="3">
    <location>
        <begin position="75"/>
        <end position="79"/>
    </location>
</feature>
<feature type="short sequence motif" description="DGA/G" evidence="3">
    <location>
        <begin position="215"/>
        <end position="217"/>
    </location>
</feature>
<feature type="active site" description="Nucleophile" evidence="3">
    <location>
        <position position="77"/>
    </location>
</feature>
<feature type="active site" description="Proton acceptor" evidence="3">
    <location>
        <position position="215"/>
    </location>
</feature>
<feature type="glycosylation site" description="N-linked (GlcNAc...) asparagine" evidence="2">
    <location>
        <position position="115"/>
    </location>
</feature>
<protein>
    <recommendedName>
        <fullName>Patatin-2-Kuras 2</fullName>
        <ecNumber>3.1.1.-</ecNumber>
    </recommendedName>
</protein>